<name>CFAI_PONAB</name>
<sequence length="583" mass="65620">MKLLHVFLLFLCFHLSFCKVTYTSQEDLVEKKCLAKKHTHLSCNKVFCQPWQICIEGTCICKLPYQCPKNGTTVCATNGRSFPTYCQQKSLECLRPGTKFLNNGTCTAEGKFSVSLKHGNTDSEGIVEVKLVDQDKTMFICKSSWSMREANVACLDLGFQQGADTQRRFKLSNLSINSTECLHVHCRGLETSLAECTFTKRRTMGYQDLADVVCYTQKADSPTNDFFQCVNGKYISQMKACDGINDCGDQSDELCCKACQGKSFHCKSGVCIPSQYRCNGEVDCITGEDEVGCEGFASVAQEETEILTADMDAERRRIKSLLPKLSCGVKNRRHIRRKRIVGGKRAQLGDLPWQVGIKDASGITCGGIYIGGCWILTAAHCLRASKTHHYQIWTTVVDWIHPDRKRIVIEYVDRIIFHENYNAGTYQNDIALMEMKKDGNKKDCELPRSIPACVPWSPYLFQPNDTCIVSGWGREKDNEKVFSLQWGEVKLISNCSKFYGNRFYEKEMECAGTYDGSIDACKGDSGGPLVCMDANNVTYVWGVVSWGENCGKPEFPGVYTKVANYFDWISYHVGRPFISQYNV</sequence>
<protein>
    <recommendedName>
        <fullName>Complement factor I</fullName>
        <ecNumber>3.4.21.45</ecNumber>
    </recommendedName>
    <alternativeName>
        <fullName>C3B/C4B inactivator</fullName>
    </alternativeName>
    <component>
        <recommendedName>
            <fullName>Complement factor I heavy chain</fullName>
        </recommendedName>
    </component>
    <component>
        <recommendedName>
            <fullName>Complement factor I light chain</fullName>
        </recommendedName>
    </component>
</protein>
<comment type="function">
    <text evidence="1">Responsible for cleaving the alpha-chains of C4b and C3b in the presence of the cofactors C4-binding protein and factor H respectively.</text>
</comment>
<comment type="catalytic activity">
    <reaction>
        <text>Inactivates complement subcomponents C3b, iC3b and C4b by proteolytic cleavage.</text>
        <dbReference type="EC" id="3.4.21.45"/>
    </reaction>
</comment>
<comment type="subunit">
    <text evidence="1">Heterodimer of a light and heavy chains; disulfide-linked. The fully processed and mature protein circulates as a zymogen, and is allosterically activated by substrate-induced remodeling of the active site (By similarity).</text>
</comment>
<comment type="subcellular location">
    <subcellularLocation>
        <location>Secreted</location>
        <location>Extracellular space</location>
    </subcellularLocation>
</comment>
<comment type="tissue specificity">
    <text>Plasma.</text>
</comment>
<comment type="similarity">
    <text evidence="6">Belongs to the peptidase S1 family.</text>
</comment>
<dbReference type="EC" id="3.4.21.45"/>
<dbReference type="EMBL" id="CR860960">
    <property type="protein sequence ID" value="CAH93062.1"/>
    <property type="molecule type" value="mRNA"/>
</dbReference>
<dbReference type="RefSeq" id="NP_001127624.1">
    <property type="nucleotide sequence ID" value="NM_001134152.1"/>
</dbReference>
<dbReference type="SMR" id="Q5R5A4"/>
<dbReference type="FunCoup" id="Q5R5A4">
    <property type="interactions" value="196"/>
</dbReference>
<dbReference type="STRING" id="9601.ENSPPYP00000016746"/>
<dbReference type="MEROPS" id="S01.199"/>
<dbReference type="GlyCosmos" id="Q5R5A4">
    <property type="glycosylation" value="7 sites, No reported glycans"/>
</dbReference>
<dbReference type="Ensembl" id="ENSPPYT00000017426.2">
    <property type="protein sequence ID" value="ENSPPYP00000016746.2"/>
    <property type="gene ID" value="ENSPPYG00000014995.3"/>
</dbReference>
<dbReference type="GeneID" id="100189676"/>
<dbReference type="CTD" id="3426"/>
<dbReference type="GeneTree" id="ENSGT00930000151042"/>
<dbReference type="InParanoid" id="Q5R5A4"/>
<dbReference type="Proteomes" id="UP000001595">
    <property type="component" value="Chromosome 4"/>
</dbReference>
<dbReference type="GO" id="GO:0005576">
    <property type="term" value="C:extracellular region"/>
    <property type="evidence" value="ECO:0007669"/>
    <property type="project" value="UniProtKB-SubCell"/>
</dbReference>
<dbReference type="GO" id="GO:0016020">
    <property type="term" value="C:membrane"/>
    <property type="evidence" value="ECO:0007669"/>
    <property type="project" value="InterPro"/>
</dbReference>
<dbReference type="GO" id="GO:0046872">
    <property type="term" value="F:metal ion binding"/>
    <property type="evidence" value="ECO:0007669"/>
    <property type="project" value="UniProtKB-KW"/>
</dbReference>
<dbReference type="GO" id="GO:0004252">
    <property type="term" value="F:serine-type endopeptidase activity"/>
    <property type="evidence" value="ECO:0007669"/>
    <property type="project" value="UniProtKB-EC"/>
</dbReference>
<dbReference type="GO" id="GO:0006958">
    <property type="term" value="P:complement activation, classical pathway"/>
    <property type="evidence" value="ECO:0007669"/>
    <property type="project" value="UniProtKB-KW"/>
</dbReference>
<dbReference type="GO" id="GO:0045087">
    <property type="term" value="P:innate immune response"/>
    <property type="evidence" value="ECO:0007669"/>
    <property type="project" value="UniProtKB-KW"/>
</dbReference>
<dbReference type="GO" id="GO:0006508">
    <property type="term" value="P:proteolysis"/>
    <property type="evidence" value="ECO:0007669"/>
    <property type="project" value="UniProtKB-KW"/>
</dbReference>
<dbReference type="CDD" id="cd00112">
    <property type="entry name" value="LDLa"/>
    <property type="match status" value="2"/>
</dbReference>
<dbReference type="CDD" id="cd00190">
    <property type="entry name" value="Tryp_SPc"/>
    <property type="match status" value="1"/>
</dbReference>
<dbReference type="FunFam" id="2.40.10.10:FF:000066">
    <property type="entry name" value="Complement factor I"/>
    <property type="match status" value="1"/>
</dbReference>
<dbReference type="FunFam" id="3.10.250.10:FF:000018">
    <property type="entry name" value="Complement factor I"/>
    <property type="match status" value="1"/>
</dbReference>
<dbReference type="FunFam" id="3.30.60.30:FF:000027">
    <property type="entry name" value="Complement factor I"/>
    <property type="match status" value="1"/>
</dbReference>
<dbReference type="FunFam" id="4.10.400.10:FF:000129">
    <property type="entry name" value="Complement factor I"/>
    <property type="match status" value="1"/>
</dbReference>
<dbReference type="FunFam" id="4.10.400.10:FF:000163">
    <property type="entry name" value="Complement factor I"/>
    <property type="match status" value="1"/>
</dbReference>
<dbReference type="Gene3D" id="3.30.60.30">
    <property type="match status" value="1"/>
</dbReference>
<dbReference type="Gene3D" id="4.10.400.10">
    <property type="entry name" value="Low-density Lipoprotein Receptor"/>
    <property type="match status" value="2"/>
</dbReference>
<dbReference type="Gene3D" id="3.10.250.10">
    <property type="entry name" value="SRCR-like domain"/>
    <property type="match status" value="1"/>
</dbReference>
<dbReference type="Gene3D" id="2.40.10.10">
    <property type="entry name" value="Trypsin-like serine proteases"/>
    <property type="match status" value="1"/>
</dbReference>
<dbReference type="InterPro" id="IPR048722">
    <property type="entry name" value="CFAI_FIMAC_N"/>
</dbReference>
<dbReference type="InterPro" id="IPR048719">
    <property type="entry name" value="CFAI_KAZAL"/>
</dbReference>
<dbReference type="InterPro" id="IPR003884">
    <property type="entry name" value="FacI_MAC"/>
</dbReference>
<dbReference type="InterPro" id="IPR002350">
    <property type="entry name" value="Kazal_dom"/>
</dbReference>
<dbReference type="InterPro" id="IPR036058">
    <property type="entry name" value="Kazal_dom_sf"/>
</dbReference>
<dbReference type="InterPro" id="IPR036055">
    <property type="entry name" value="LDL_receptor-like_sf"/>
</dbReference>
<dbReference type="InterPro" id="IPR023415">
    <property type="entry name" value="LDLR_class-A_CS"/>
</dbReference>
<dbReference type="InterPro" id="IPR002172">
    <property type="entry name" value="LDrepeatLR_classA_rpt"/>
</dbReference>
<dbReference type="InterPro" id="IPR009003">
    <property type="entry name" value="Peptidase_S1_PA"/>
</dbReference>
<dbReference type="InterPro" id="IPR043504">
    <property type="entry name" value="Peptidase_S1_PA_chymotrypsin"/>
</dbReference>
<dbReference type="InterPro" id="IPR001314">
    <property type="entry name" value="Peptidase_S1A"/>
</dbReference>
<dbReference type="InterPro" id="IPR001190">
    <property type="entry name" value="SRCR"/>
</dbReference>
<dbReference type="InterPro" id="IPR036772">
    <property type="entry name" value="SRCR-like_dom_sf"/>
</dbReference>
<dbReference type="InterPro" id="IPR001254">
    <property type="entry name" value="Trypsin_dom"/>
</dbReference>
<dbReference type="InterPro" id="IPR018114">
    <property type="entry name" value="TRYPSIN_HIS"/>
</dbReference>
<dbReference type="InterPro" id="IPR033116">
    <property type="entry name" value="TRYPSIN_SER"/>
</dbReference>
<dbReference type="PANTHER" id="PTHR24252">
    <property type="entry name" value="ACROSIN-RELATED"/>
    <property type="match status" value="1"/>
</dbReference>
<dbReference type="PANTHER" id="PTHR24252:SF7">
    <property type="entry name" value="HYALIN"/>
    <property type="match status" value="1"/>
</dbReference>
<dbReference type="Pfam" id="PF21286">
    <property type="entry name" value="CFAI_FIMAC_N"/>
    <property type="match status" value="1"/>
</dbReference>
<dbReference type="Pfam" id="PF21287">
    <property type="entry name" value="Kazal_CFAI"/>
    <property type="match status" value="1"/>
</dbReference>
<dbReference type="Pfam" id="PF00057">
    <property type="entry name" value="Ldl_recept_a"/>
    <property type="match status" value="2"/>
</dbReference>
<dbReference type="Pfam" id="PF00530">
    <property type="entry name" value="SRCR"/>
    <property type="match status" value="1"/>
</dbReference>
<dbReference type="Pfam" id="PF00089">
    <property type="entry name" value="Trypsin"/>
    <property type="match status" value="1"/>
</dbReference>
<dbReference type="PRINTS" id="PR00722">
    <property type="entry name" value="CHYMOTRYPSIN"/>
</dbReference>
<dbReference type="SMART" id="SM00057">
    <property type="entry name" value="FIMAC"/>
    <property type="match status" value="1"/>
</dbReference>
<dbReference type="SMART" id="SM00192">
    <property type="entry name" value="LDLa"/>
    <property type="match status" value="2"/>
</dbReference>
<dbReference type="SMART" id="SM00202">
    <property type="entry name" value="SR"/>
    <property type="match status" value="1"/>
</dbReference>
<dbReference type="SMART" id="SM00020">
    <property type="entry name" value="Tryp_SPc"/>
    <property type="match status" value="1"/>
</dbReference>
<dbReference type="SUPFAM" id="SSF100895">
    <property type="entry name" value="Kazal-type serine protease inhibitors"/>
    <property type="match status" value="1"/>
</dbReference>
<dbReference type="SUPFAM" id="SSF57424">
    <property type="entry name" value="LDL receptor-like module"/>
    <property type="match status" value="2"/>
</dbReference>
<dbReference type="SUPFAM" id="SSF56487">
    <property type="entry name" value="SRCR-like"/>
    <property type="match status" value="1"/>
</dbReference>
<dbReference type="SUPFAM" id="SSF50494">
    <property type="entry name" value="Trypsin-like serine proteases"/>
    <property type="match status" value="1"/>
</dbReference>
<dbReference type="PROSITE" id="PS51465">
    <property type="entry name" value="KAZAL_2"/>
    <property type="match status" value="1"/>
</dbReference>
<dbReference type="PROSITE" id="PS01209">
    <property type="entry name" value="LDLRA_1"/>
    <property type="match status" value="1"/>
</dbReference>
<dbReference type="PROSITE" id="PS50068">
    <property type="entry name" value="LDLRA_2"/>
    <property type="match status" value="2"/>
</dbReference>
<dbReference type="PROSITE" id="PS50287">
    <property type="entry name" value="SRCR_2"/>
    <property type="match status" value="1"/>
</dbReference>
<dbReference type="PROSITE" id="PS50240">
    <property type="entry name" value="TRYPSIN_DOM"/>
    <property type="match status" value="1"/>
</dbReference>
<dbReference type="PROSITE" id="PS00134">
    <property type="entry name" value="TRYPSIN_HIS"/>
    <property type="match status" value="1"/>
</dbReference>
<dbReference type="PROSITE" id="PS00135">
    <property type="entry name" value="TRYPSIN_SER"/>
    <property type="match status" value="1"/>
</dbReference>
<evidence type="ECO:0000250" key="1"/>
<evidence type="ECO:0000250" key="2">
    <source>
        <dbReference type="UniProtKB" id="P05156"/>
    </source>
</evidence>
<evidence type="ECO:0000255" key="3"/>
<evidence type="ECO:0000255" key="4">
    <source>
        <dbReference type="PROSITE-ProRule" id="PRU00124"/>
    </source>
</evidence>
<evidence type="ECO:0000255" key="5">
    <source>
        <dbReference type="PROSITE-ProRule" id="PRU00196"/>
    </source>
</evidence>
<evidence type="ECO:0000255" key="6">
    <source>
        <dbReference type="PROSITE-ProRule" id="PRU00274"/>
    </source>
</evidence>
<evidence type="ECO:0000255" key="7">
    <source>
        <dbReference type="PROSITE-ProRule" id="PRU00798"/>
    </source>
</evidence>
<reference key="1">
    <citation type="submission" date="2004-11" db="EMBL/GenBank/DDBJ databases">
        <authorList>
            <consortium name="The German cDNA consortium"/>
        </authorList>
    </citation>
    <scope>NUCLEOTIDE SEQUENCE [LARGE SCALE MRNA]</scope>
    <source>
        <tissue>Liver</tissue>
    </source>
</reference>
<organism>
    <name type="scientific">Pongo abelii</name>
    <name type="common">Sumatran orangutan</name>
    <name type="synonym">Pongo pygmaeus abelii</name>
    <dbReference type="NCBI Taxonomy" id="9601"/>
    <lineage>
        <taxon>Eukaryota</taxon>
        <taxon>Metazoa</taxon>
        <taxon>Chordata</taxon>
        <taxon>Craniata</taxon>
        <taxon>Vertebrata</taxon>
        <taxon>Euteleostomi</taxon>
        <taxon>Mammalia</taxon>
        <taxon>Eutheria</taxon>
        <taxon>Euarchontoglires</taxon>
        <taxon>Primates</taxon>
        <taxon>Haplorrhini</taxon>
        <taxon>Catarrhini</taxon>
        <taxon>Hominidae</taxon>
        <taxon>Pongo</taxon>
    </lineage>
</organism>
<feature type="signal peptide" evidence="1">
    <location>
        <begin position="1"/>
        <end position="18"/>
    </location>
</feature>
<feature type="chain" id="PRO_0000285861" description="Complement factor I">
    <location>
        <begin position="19"/>
        <end position="583"/>
    </location>
</feature>
<feature type="chain" id="PRO_0000285862" description="Complement factor I heavy chain">
    <location>
        <begin position="19"/>
        <end position="335"/>
    </location>
</feature>
<feature type="chain" id="PRO_0000285863" description="Complement factor I light chain">
    <location>
        <begin position="340"/>
        <end position="583"/>
    </location>
</feature>
<feature type="domain" description="Kazal-like" evidence="7">
    <location>
        <begin position="55"/>
        <end position="108"/>
    </location>
</feature>
<feature type="domain" description="SRCR" evidence="5">
    <location>
        <begin position="114"/>
        <end position="212"/>
    </location>
</feature>
<feature type="domain" description="LDL-receptor class A 1" evidence="4">
    <location>
        <begin position="213"/>
        <end position="257"/>
    </location>
</feature>
<feature type="domain" description="LDL-receptor class A 2" evidence="4">
    <location>
        <begin position="258"/>
        <end position="294"/>
    </location>
</feature>
<feature type="domain" description="Peptidase S1" evidence="6">
    <location>
        <begin position="340"/>
        <end position="574"/>
    </location>
</feature>
<feature type="active site" description="Charge relay system" evidence="1">
    <location>
        <position position="380"/>
    </location>
</feature>
<feature type="active site" description="Charge relay system" evidence="1">
    <location>
        <position position="429"/>
    </location>
</feature>
<feature type="active site" description="Charge relay system" evidence="1">
    <location>
        <position position="525"/>
    </location>
</feature>
<feature type="binding site" evidence="2">
    <location>
        <position position="239"/>
    </location>
    <ligand>
        <name>Ca(2+)</name>
        <dbReference type="ChEBI" id="CHEBI:29108"/>
        <label>1</label>
    </ligand>
</feature>
<feature type="binding site" evidence="2">
    <location>
        <position position="242"/>
    </location>
    <ligand>
        <name>Ca(2+)</name>
        <dbReference type="ChEBI" id="CHEBI:29108"/>
        <label>1</label>
    </ligand>
</feature>
<feature type="binding site" evidence="2">
    <location>
        <position position="244"/>
    </location>
    <ligand>
        <name>Ca(2+)</name>
        <dbReference type="ChEBI" id="CHEBI:29108"/>
        <label>1</label>
    </ligand>
</feature>
<feature type="binding site" evidence="2">
    <location>
        <position position="246"/>
    </location>
    <ligand>
        <name>Ca(2+)</name>
        <dbReference type="ChEBI" id="CHEBI:29108"/>
        <label>1</label>
    </ligand>
</feature>
<feature type="binding site" evidence="2">
    <location>
        <position position="252"/>
    </location>
    <ligand>
        <name>Ca(2+)</name>
        <dbReference type="ChEBI" id="CHEBI:29108"/>
        <label>1</label>
    </ligand>
</feature>
<feature type="binding site" evidence="2">
    <location>
        <position position="253"/>
    </location>
    <ligand>
        <name>Ca(2+)</name>
        <dbReference type="ChEBI" id="CHEBI:29108"/>
        <label>1</label>
    </ligand>
</feature>
<feature type="binding site" evidence="2">
    <location>
        <position position="276"/>
    </location>
    <ligand>
        <name>Ca(2+)</name>
        <dbReference type="ChEBI" id="CHEBI:29108"/>
        <label>2</label>
    </ligand>
</feature>
<feature type="binding site" evidence="2">
    <location>
        <position position="279"/>
    </location>
    <ligand>
        <name>Ca(2+)</name>
        <dbReference type="ChEBI" id="CHEBI:29108"/>
        <label>2</label>
    </ligand>
</feature>
<feature type="binding site" evidence="2">
    <location>
        <position position="281"/>
    </location>
    <ligand>
        <name>Ca(2+)</name>
        <dbReference type="ChEBI" id="CHEBI:29108"/>
        <label>2</label>
    </ligand>
</feature>
<feature type="binding site" evidence="2">
    <location>
        <position position="283"/>
    </location>
    <ligand>
        <name>Ca(2+)</name>
        <dbReference type="ChEBI" id="CHEBI:29108"/>
        <label>2</label>
    </ligand>
</feature>
<feature type="binding site" evidence="2">
    <location>
        <position position="289"/>
    </location>
    <ligand>
        <name>Ca(2+)</name>
        <dbReference type="ChEBI" id="CHEBI:29108"/>
        <label>2</label>
    </ligand>
</feature>
<feature type="binding site" evidence="2">
    <location>
        <position position="290"/>
    </location>
    <ligand>
        <name>Ca(2+)</name>
        <dbReference type="ChEBI" id="CHEBI:29108"/>
        <label>2</label>
    </ligand>
</feature>
<feature type="glycosylation site" description="N-linked (GlcNAc...) asparagine" evidence="3">
    <location>
        <position position="70"/>
    </location>
</feature>
<feature type="glycosylation site" description="N-linked (GlcNAc...) asparagine" evidence="3">
    <location>
        <position position="103"/>
    </location>
</feature>
<feature type="glycosylation site" description="N-linked (GlcNAc...) asparagine" evidence="3">
    <location>
        <position position="173"/>
    </location>
</feature>
<feature type="glycosylation site" description="N-linked (GlcNAc...) asparagine" evidence="3">
    <location>
        <position position="177"/>
    </location>
</feature>
<feature type="glycosylation site" description="N-linked (GlcNAc...) asparagine" evidence="3">
    <location>
        <position position="464"/>
    </location>
</feature>
<feature type="glycosylation site" description="N-linked (GlcNAc...) asparagine" evidence="3">
    <location>
        <position position="494"/>
    </location>
</feature>
<feature type="glycosylation site" description="N-linked (GlcNAc...) asparagine" evidence="3">
    <location>
        <position position="536"/>
    </location>
</feature>
<feature type="disulfide bond" evidence="1">
    <location>
        <begin position="33"/>
        <end position="255"/>
    </location>
</feature>
<feature type="disulfide bond" evidence="1">
    <location>
        <begin position="43"/>
        <end position="54"/>
    </location>
</feature>
<feature type="disulfide bond" evidence="1">
    <location>
        <begin position="48"/>
        <end position="59"/>
    </location>
</feature>
<feature type="disulfide bond" evidence="1">
    <location>
        <begin position="61"/>
        <end position="93"/>
    </location>
</feature>
<feature type="disulfide bond" evidence="1">
    <location>
        <begin position="67"/>
        <end position="86"/>
    </location>
</feature>
<feature type="disulfide bond" evidence="1">
    <location>
        <begin position="75"/>
        <end position="106"/>
    </location>
</feature>
<feature type="disulfide bond" evidence="1">
    <location>
        <begin position="141"/>
        <end position="181"/>
    </location>
</feature>
<feature type="disulfide bond" evidence="1">
    <location>
        <begin position="154"/>
        <end position="214"/>
    </location>
</feature>
<feature type="disulfide bond" evidence="1">
    <location>
        <begin position="186"/>
        <end position="196"/>
    </location>
</feature>
<feature type="disulfide bond" evidence="1">
    <location>
        <begin position="229"/>
        <end position="247"/>
    </location>
</feature>
<feature type="disulfide bond" evidence="1">
    <location>
        <begin position="259"/>
        <end position="271"/>
    </location>
</feature>
<feature type="disulfide bond" evidence="1">
    <location>
        <begin position="266"/>
        <end position="284"/>
    </location>
</feature>
<feature type="disulfide bond" evidence="1">
    <location>
        <begin position="278"/>
        <end position="293"/>
    </location>
</feature>
<feature type="disulfide bond" description="Interchain (between heavy and light chains)" evidence="4 5 6 7">
    <location>
        <begin position="327"/>
        <end position="453"/>
    </location>
</feature>
<feature type="disulfide bond" evidence="1">
    <location>
        <begin position="365"/>
        <end position="381"/>
    </location>
</feature>
<feature type="disulfide bond" evidence="1">
    <location>
        <begin position="373"/>
        <end position="444"/>
    </location>
</feature>
<feature type="disulfide bond" evidence="1">
    <location>
        <begin position="467"/>
        <end position="531"/>
    </location>
</feature>
<feature type="disulfide bond" evidence="1">
    <location>
        <begin position="495"/>
        <end position="510"/>
    </location>
</feature>
<feature type="disulfide bond" evidence="1">
    <location>
        <begin position="521"/>
        <end position="550"/>
    </location>
</feature>
<gene>
    <name type="primary">CFI</name>
</gene>
<accession>Q5R5A4</accession>
<proteinExistence type="evidence at transcript level"/>
<keyword id="KW-0106">Calcium</keyword>
<keyword id="KW-0165">Cleavage on pair of basic residues</keyword>
<keyword id="KW-0180">Complement pathway</keyword>
<keyword id="KW-1015">Disulfide bond</keyword>
<keyword id="KW-0325">Glycoprotein</keyword>
<keyword id="KW-0378">Hydrolase</keyword>
<keyword id="KW-0391">Immunity</keyword>
<keyword id="KW-0399">Innate immunity</keyword>
<keyword id="KW-0479">Metal-binding</keyword>
<keyword id="KW-0645">Protease</keyword>
<keyword id="KW-1185">Reference proteome</keyword>
<keyword id="KW-0677">Repeat</keyword>
<keyword id="KW-0964">Secreted</keyword>
<keyword id="KW-0720">Serine protease</keyword>
<keyword id="KW-0732">Signal</keyword>